<comment type="biotechnology">
    <text evidence="3">Possible candidate for an effective malaria vaccine as determined by epitope response in sera.</text>
</comment>
<protein>
    <recommendedName>
        <fullName>Coiled-coil domain-containing protein PF3D7_1144200</fullName>
    </recommendedName>
</protein>
<organism>
    <name type="scientific">Plasmodium falciparum (isolate 3D7)</name>
    <dbReference type="NCBI Taxonomy" id="36329"/>
    <lineage>
        <taxon>Eukaryota</taxon>
        <taxon>Sar</taxon>
        <taxon>Alveolata</taxon>
        <taxon>Apicomplexa</taxon>
        <taxon>Aconoidasida</taxon>
        <taxon>Haemosporida</taxon>
        <taxon>Plasmodiidae</taxon>
        <taxon>Plasmodium</taxon>
        <taxon>Plasmodium (Laverania)</taxon>
    </lineage>
</organism>
<reference key="1">
    <citation type="journal article" date="2002" name="Nature">
        <title>Genome sequence of the human malaria parasite Plasmodium falciparum.</title>
        <authorList>
            <person name="Gardner M.J."/>
            <person name="Hall N."/>
            <person name="Fung E."/>
            <person name="White O."/>
            <person name="Berriman M."/>
            <person name="Hyman R.W."/>
            <person name="Carlton J.M."/>
            <person name="Pain A."/>
            <person name="Nelson K.E."/>
            <person name="Bowman S."/>
            <person name="Paulsen I.T."/>
            <person name="James K.D."/>
            <person name="Eisen J.A."/>
            <person name="Rutherford K.M."/>
            <person name="Salzberg S.L."/>
            <person name="Craig A."/>
            <person name="Kyes S."/>
            <person name="Chan M.-S."/>
            <person name="Nene V."/>
            <person name="Shallom S.J."/>
            <person name="Suh B."/>
            <person name="Peterson J."/>
            <person name="Angiuoli S."/>
            <person name="Pertea M."/>
            <person name="Allen J."/>
            <person name="Selengut J."/>
            <person name="Haft D."/>
            <person name="Mather M.W."/>
            <person name="Vaidya A.B."/>
            <person name="Martin D.M.A."/>
            <person name="Fairlamb A.H."/>
            <person name="Fraunholz M.J."/>
            <person name="Roos D.S."/>
            <person name="Ralph S.A."/>
            <person name="McFadden G.I."/>
            <person name="Cummings L.M."/>
            <person name="Subramanian G.M."/>
            <person name="Mungall C."/>
            <person name="Venter J.C."/>
            <person name="Carucci D.J."/>
            <person name="Hoffman S.L."/>
            <person name="Newbold C."/>
            <person name="Davis R.W."/>
            <person name="Fraser C.M."/>
            <person name="Barrell B.G."/>
        </authorList>
    </citation>
    <scope>NUCLEOTIDE SEQUENCE [LARGE SCALE GENOMIC DNA]</scope>
    <source>
        <strain>3D7</strain>
    </source>
</reference>
<reference evidence="4" key="2">
    <citation type="journal article" date="2007" name="PLoS ONE">
        <title>Rapid identification of malaria vaccine candidates based on alpha-helical coiled coil protein motif.</title>
        <authorList>
            <person name="Villard V."/>
            <person name="Agak G.W."/>
            <person name="Frank G."/>
            <person name="Jafarshad A."/>
            <person name="Servis C."/>
            <person name="Nebie I."/>
            <person name="Sirima S.B."/>
            <person name="Felger I."/>
            <person name="Arevalo-Herrera M."/>
            <person name="Herrera S."/>
            <person name="Heitz F."/>
            <person name="Baecker V."/>
            <person name="Druilhe P."/>
            <person name="Kajava A.V."/>
            <person name="Corradin G."/>
        </authorList>
    </citation>
    <scope>SYNTHESIS OF 271-310</scope>
    <scope>POSSIBLE CANDIDATE MALARIA EPITOPE</scope>
</reference>
<keyword id="KW-0175">Coiled coil</keyword>
<keyword id="KW-0477">Merozoite</keyword>
<keyword id="KW-1185">Reference proteome</keyword>
<proteinExistence type="evidence at protein level"/>
<evidence type="ECO:0000255" key="1"/>
<evidence type="ECO:0000256" key="2">
    <source>
        <dbReference type="SAM" id="MobiDB-lite"/>
    </source>
</evidence>
<evidence type="ECO:0000269" key="3">
    <source>
    </source>
</evidence>
<evidence type="ECO:0000305" key="4"/>
<accession>Q8IHS4</accession>
<accession>A0A144A139</accession>
<feature type="chain" id="PRO_0000364020" description="Coiled-coil domain-containing protein PF3D7_1144200">
    <location>
        <begin position="1"/>
        <end position="319"/>
    </location>
</feature>
<feature type="region of interest" description="Disordered" evidence="2">
    <location>
        <begin position="1"/>
        <end position="43"/>
    </location>
</feature>
<feature type="region of interest" description="Disordered" evidence="2">
    <location>
        <begin position="112"/>
        <end position="158"/>
    </location>
</feature>
<feature type="coiled-coil region" evidence="1">
    <location>
        <begin position="100"/>
        <end position="134"/>
    </location>
</feature>
<feature type="coiled-coil region" evidence="1">
    <location>
        <begin position="166"/>
        <end position="242"/>
    </location>
</feature>
<feature type="coiled-coil region" evidence="1">
    <location>
        <begin position="281"/>
        <end position="310"/>
    </location>
</feature>
<feature type="compositionally biased region" description="Basic and acidic residues" evidence="2">
    <location>
        <begin position="1"/>
        <end position="12"/>
    </location>
</feature>
<feature type="compositionally biased region" description="Polar residues" evidence="2">
    <location>
        <begin position="16"/>
        <end position="26"/>
    </location>
</feature>
<feature type="compositionally biased region" description="Basic and acidic residues" evidence="2">
    <location>
        <begin position="27"/>
        <end position="36"/>
    </location>
</feature>
<feature type="compositionally biased region" description="Basic and acidic residues" evidence="2">
    <location>
        <begin position="112"/>
        <end position="131"/>
    </location>
</feature>
<feature type="compositionally biased region" description="Low complexity" evidence="2">
    <location>
        <begin position="132"/>
        <end position="150"/>
    </location>
</feature>
<sequence length="319" mass="37596">MSEEHSNDHIEDVVLCSQNCDETNSPKNEKDEKDFKNFSSESSDSYYKNKFRLKKNSIEIKKKSLLKSKLKNDDIQTIIKNDPILSKLNKTMTTDDEIFDLANKKENKTKFKLEKEKEKNEKKEKKEKKVTNDSTNNKNKNNSVPFLNENQENKNQHNHNNKIKYELNEQTYDINNISEEILKKENHHTNIEYNEKVQDQDNTLNINQKVNKIQLNSTKKQKQKEKTKKEIKLNEQNEIKKNNQNFNSSILNEIKKNKELSPLSLIKKHGRLINNIEEIYNSNCEQIQNVRDEFAELKNDLNKIMNLINIGQKAVASLK</sequence>
<gene>
    <name type="ORF">PF11_0455</name>
    <name type="ORF">PF3D7_1144200</name>
</gene>
<dbReference type="EMBL" id="LN999945">
    <property type="protein sequence ID" value="CZT99105.1"/>
    <property type="molecule type" value="Genomic_DNA"/>
</dbReference>
<dbReference type="RefSeq" id="XP_001348122.1">
    <property type="nucleotide sequence ID" value="XM_001348086.1"/>
</dbReference>
<dbReference type="SMR" id="Q8IHS4"/>
<dbReference type="FunCoup" id="Q8IHS4">
    <property type="interactions" value="747"/>
</dbReference>
<dbReference type="PaxDb" id="5833-PF11_0455"/>
<dbReference type="EnsemblProtists" id="CZT99105">
    <property type="protein sequence ID" value="CZT99105"/>
    <property type="gene ID" value="PF3D7_1144200"/>
</dbReference>
<dbReference type="GeneID" id="810998"/>
<dbReference type="KEGG" id="pfa:PF3D7_1144200"/>
<dbReference type="VEuPathDB" id="PlasmoDB:PF3D7_1144200"/>
<dbReference type="HOGENOM" id="CLU_981677_0_0_1"/>
<dbReference type="InParanoid" id="Q8IHS4"/>
<dbReference type="OMA" id="IMSIMNV"/>
<dbReference type="OrthoDB" id="384054at2759"/>
<dbReference type="Proteomes" id="UP000001450">
    <property type="component" value="Chromosome 11"/>
</dbReference>
<name>CCD1_PLAF7</name>